<protein>
    <recommendedName>
        <fullName evidence="1">LexA repressor</fullName>
        <ecNumber evidence="1">3.4.21.88</ecNumber>
    </recommendedName>
</protein>
<reference key="1">
    <citation type="submission" date="2007-05" db="EMBL/GenBank/DDBJ databases">
        <title>Complete sequence of Geobacter uraniireducens Rf4.</title>
        <authorList>
            <consortium name="US DOE Joint Genome Institute"/>
            <person name="Copeland A."/>
            <person name="Lucas S."/>
            <person name="Lapidus A."/>
            <person name="Barry K."/>
            <person name="Detter J.C."/>
            <person name="Glavina del Rio T."/>
            <person name="Hammon N."/>
            <person name="Israni S."/>
            <person name="Dalin E."/>
            <person name="Tice H."/>
            <person name="Pitluck S."/>
            <person name="Chertkov O."/>
            <person name="Brettin T."/>
            <person name="Bruce D."/>
            <person name="Han C."/>
            <person name="Schmutz J."/>
            <person name="Larimer F."/>
            <person name="Land M."/>
            <person name="Hauser L."/>
            <person name="Kyrpides N."/>
            <person name="Mikhailova N."/>
            <person name="Shelobolina E."/>
            <person name="Aklujkar M."/>
            <person name="Lovley D."/>
            <person name="Richardson P."/>
        </authorList>
    </citation>
    <scope>NUCLEOTIDE SEQUENCE [LARGE SCALE GENOMIC DNA]</scope>
    <source>
        <strain>ATCC BAA-1134 / JCM 13001 / Rf4</strain>
    </source>
</reference>
<name>LEXA_GEOUR</name>
<organism>
    <name type="scientific">Geotalea uraniireducens (strain Rf4)</name>
    <name type="common">Geobacter uraniireducens</name>
    <dbReference type="NCBI Taxonomy" id="351605"/>
    <lineage>
        <taxon>Bacteria</taxon>
        <taxon>Pseudomonadati</taxon>
        <taxon>Thermodesulfobacteriota</taxon>
        <taxon>Desulfuromonadia</taxon>
        <taxon>Geobacterales</taxon>
        <taxon>Geobacteraceae</taxon>
        <taxon>Geotalea</taxon>
    </lineage>
</organism>
<evidence type="ECO:0000255" key="1">
    <source>
        <dbReference type="HAMAP-Rule" id="MF_00015"/>
    </source>
</evidence>
<comment type="function">
    <text evidence="1">Represses a number of genes involved in the response to DNA damage (SOS response), including recA and lexA. In the presence of single-stranded DNA, RecA interacts with LexA causing an autocatalytic cleavage which disrupts the DNA-binding part of LexA, leading to derepression of the SOS regulon and eventually DNA repair.</text>
</comment>
<comment type="catalytic activity">
    <reaction evidence="1">
        <text>Hydrolysis of Ala-|-Gly bond in repressor LexA.</text>
        <dbReference type="EC" id="3.4.21.88"/>
    </reaction>
</comment>
<comment type="subunit">
    <text evidence="1">Homodimer.</text>
</comment>
<comment type="similarity">
    <text evidence="1">Belongs to the peptidase S24 family.</text>
</comment>
<gene>
    <name evidence="1" type="primary">lexA</name>
    <name type="ordered locus">Gura_1142</name>
</gene>
<sequence>MEKLTPRQQMVLAFISAHLESHGYPPTLREIGGHLGINGTLGVMKHLDALERKGFITRNAGSSRGIVLVGAVAATSIPIVGVVRAGALQPAIEDIEGYFAVDRALVKGADCFFLRVKGDSMIEAGIRSGDLALVRPQATADNGDIVVARINDEATLKRFFREKDRIRLQPENSAMEPIIVKAKAGEVNIIGKVTGIFRSLE</sequence>
<dbReference type="EC" id="3.4.21.88" evidence="1"/>
<dbReference type="EMBL" id="CP000698">
    <property type="protein sequence ID" value="ABQ25346.1"/>
    <property type="molecule type" value="Genomic_DNA"/>
</dbReference>
<dbReference type="RefSeq" id="WP_011938068.1">
    <property type="nucleotide sequence ID" value="NC_009483.1"/>
</dbReference>
<dbReference type="SMR" id="A5GAQ4"/>
<dbReference type="STRING" id="351605.Gura_1142"/>
<dbReference type="MEROPS" id="S24.001"/>
<dbReference type="KEGG" id="gur:Gura_1142"/>
<dbReference type="HOGENOM" id="CLU_066192_45_1_7"/>
<dbReference type="OrthoDB" id="9802364at2"/>
<dbReference type="Proteomes" id="UP000006695">
    <property type="component" value="Chromosome"/>
</dbReference>
<dbReference type="GO" id="GO:0003677">
    <property type="term" value="F:DNA binding"/>
    <property type="evidence" value="ECO:0007669"/>
    <property type="project" value="UniProtKB-UniRule"/>
</dbReference>
<dbReference type="GO" id="GO:0004252">
    <property type="term" value="F:serine-type endopeptidase activity"/>
    <property type="evidence" value="ECO:0007669"/>
    <property type="project" value="UniProtKB-UniRule"/>
</dbReference>
<dbReference type="GO" id="GO:0006281">
    <property type="term" value="P:DNA repair"/>
    <property type="evidence" value="ECO:0007669"/>
    <property type="project" value="UniProtKB-UniRule"/>
</dbReference>
<dbReference type="GO" id="GO:0006260">
    <property type="term" value="P:DNA replication"/>
    <property type="evidence" value="ECO:0007669"/>
    <property type="project" value="UniProtKB-UniRule"/>
</dbReference>
<dbReference type="GO" id="GO:0045892">
    <property type="term" value="P:negative regulation of DNA-templated transcription"/>
    <property type="evidence" value="ECO:0007669"/>
    <property type="project" value="UniProtKB-UniRule"/>
</dbReference>
<dbReference type="GO" id="GO:0006508">
    <property type="term" value="P:proteolysis"/>
    <property type="evidence" value="ECO:0007669"/>
    <property type="project" value="InterPro"/>
</dbReference>
<dbReference type="GO" id="GO:0009432">
    <property type="term" value="P:SOS response"/>
    <property type="evidence" value="ECO:0007669"/>
    <property type="project" value="UniProtKB-UniRule"/>
</dbReference>
<dbReference type="CDD" id="cd06529">
    <property type="entry name" value="S24_LexA-like"/>
    <property type="match status" value="1"/>
</dbReference>
<dbReference type="FunFam" id="1.10.10.10:FF:000009">
    <property type="entry name" value="LexA repressor"/>
    <property type="match status" value="1"/>
</dbReference>
<dbReference type="FunFam" id="2.10.109.10:FF:000001">
    <property type="entry name" value="LexA repressor"/>
    <property type="match status" value="1"/>
</dbReference>
<dbReference type="Gene3D" id="2.10.109.10">
    <property type="entry name" value="Umud Fragment, subunit A"/>
    <property type="match status" value="1"/>
</dbReference>
<dbReference type="Gene3D" id="1.10.10.10">
    <property type="entry name" value="Winged helix-like DNA-binding domain superfamily/Winged helix DNA-binding domain"/>
    <property type="match status" value="1"/>
</dbReference>
<dbReference type="HAMAP" id="MF_00015">
    <property type="entry name" value="LexA"/>
    <property type="match status" value="1"/>
</dbReference>
<dbReference type="InterPro" id="IPR006200">
    <property type="entry name" value="LexA"/>
</dbReference>
<dbReference type="InterPro" id="IPR039418">
    <property type="entry name" value="LexA-like"/>
</dbReference>
<dbReference type="InterPro" id="IPR036286">
    <property type="entry name" value="LexA/Signal_pep-like_sf"/>
</dbReference>
<dbReference type="InterPro" id="IPR006199">
    <property type="entry name" value="LexA_DNA-bd_dom"/>
</dbReference>
<dbReference type="InterPro" id="IPR050077">
    <property type="entry name" value="LexA_repressor"/>
</dbReference>
<dbReference type="InterPro" id="IPR006197">
    <property type="entry name" value="Peptidase_S24_LexA"/>
</dbReference>
<dbReference type="InterPro" id="IPR015927">
    <property type="entry name" value="Peptidase_S24_S26A/B/C"/>
</dbReference>
<dbReference type="InterPro" id="IPR036388">
    <property type="entry name" value="WH-like_DNA-bd_sf"/>
</dbReference>
<dbReference type="InterPro" id="IPR036390">
    <property type="entry name" value="WH_DNA-bd_sf"/>
</dbReference>
<dbReference type="NCBIfam" id="TIGR00498">
    <property type="entry name" value="lexA"/>
    <property type="match status" value="1"/>
</dbReference>
<dbReference type="PANTHER" id="PTHR33516">
    <property type="entry name" value="LEXA REPRESSOR"/>
    <property type="match status" value="1"/>
</dbReference>
<dbReference type="PANTHER" id="PTHR33516:SF2">
    <property type="entry name" value="LEXA REPRESSOR-RELATED"/>
    <property type="match status" value="1"/>
</dbReference>
<dbReference type="Pfam" id="PF01726">
    <property type="entry name" value="LexA_DNA_bind"/>
    <property type="match status" value="1"/>
</dbReference>
<dbReference type="Pfam" id="PF00717">
    <property type="entry name" value="Peptidase_S24"/>
    <property type="match status" value="1"/>
</dbReference>
<dbReference type="PRINTS" id="PR00726">
    <property type="entry name" value="LEXASERPTASE"/>
</dbReference>
<dbReference type="SUPFAM" id="SSF51306">
    <property type="entry name" value="LexA/Signal peptidase"/>
    <property type="match status" value="1"/>
</dbReference>
<dbReference type="SUPFAM" id="SSF46785">
    <property type="entry name" value="Winged helix' DNA-binding domain"/>
    <property type="match status" value="1"/>
</dbReference>
<feature type="chain" id="PRO_1000074055" description="LexA repressor">
    <location>
        <begin position="1"/>
        <end position="201"/>
    </location>
</feature>
<feature type="DNA-binding region" description="H-T-H motif" evidence="1">
    <location>
        <begin position="28"/>
        <end position="48"/>
    </location>
</feature>
<feature type="active site" description="For autocatalytic cleavage activity" evidence="1">
    <location>
        <position position="120"/>
    </location>
</feature>
<feature type="active site" description="For autocatalytic cleavage activity" evidence="1">
    <location>
        <position position="157"/>
    </location>
</feature>
<feature type="site" description="Cleavage; by autolysis" evidence="1">
    <location>
        <begin position="85"/>
        <end position="86"/>
    </location>
</feature>
<keyword id="KW-0068">Autocatalytic cleavage</keyword>
<keyword id="KW-0227">DNA damage</keyword>
<keyword id="KW-0234">DNA repair</keyword>
<keyword id="KW-0235">DNA replication</keyword>
<keyword id="KW-0238">DNA-binding</keyword>
<keyword id="KW-0378">Hydrolase</keyword>
<keyword id="KW-1185">Reference proteome</keyword>
<keyword id="KW-0678">Repressor</keyword>
<keyword id="KW-0742">SOS response</keyword>
<keyword id="KW-0804">Transcription</keyword>
<keyword id="KW-0805">Transcription regulation</keyword>
<accession>A5GAQ4</accession>
<proteinExistence type="inferred from homology"/>